<protein>
    <recommendedName>
        <fullName evidence="2">Phosphatidylethanolamine N-methyltransferase</fullName>
        <shortName evidence="2">PE methyltransferase</shortName>
        <shortName evidence="2">PEAMT</shortName>
        <shortName evidence="2">PEMT</shortName>
        <ecNumber evidence="2">2.1.1.17</ecNumber>
    </recommendedName>
</protein>
<organism>
    <name type="scientific">Saccharomyces cerevisiae (strain AWRI1631)</name>
    <name type="common">Baker's yeast</name>
    <dbReference type="NCBI Taxonomy" id="545124"/>
    <lineage>
        <taxon>Eukaryota</taxon>
        <taxon>Fungi</taxon>
        <taxon>Dikarya</taxon>
        <taxon>Ascomycota</taxon>
        <taxon>Saccharomycotina</taxon>
        <taxon>Saccharomycetes</taxon>
        <taxon>Saccharomycetales</taxon>
        <taxon>Saccharomycetaceae</taxon>
        <taxon>Saccharomyces</taxon>
    </lineage>
</organism>
<name>CHO2_YEAS6</name>
<gene>
    <name type="primary">CHO2</name>
    <name type="ORF">AWRI1631_73790</name>
</gene>
<comment type="function">
    <text evidence="2">Catalyzes the first step of the methylation pathway of phosphatidylcholine biosynthesis, the SAM-dependent methylation of phosphatidylethanolamine (PE) to phosphatidylmonomethylethanolamine (PMME).</text>
</comment>
<comment type="catalytic activity">
    <reaction evidence="2">
        <text>a 1,2-diacyl-sn-glycero-3-phosphoethanolamine + S-adenosyl-L-methionine = a 1,2-diacyl-sn-glycero-3-phospho-N-methylethanolamine + S-adenosyl-L-homocysteine + H(+)</text>
        <dbReference type="Rhea" id="RHEA:11164"/>
        <dbReference type="ChEBI" id="CHEBI:15378"/>
        <dbReference type="ChEBI" id="CHEBI:57856"/>
        <dbReference type="ChEBI" id="CHEBI:59789"/>
        <dbReference type="ChEBI" id="CHEBI:64573"/>
        <dbReference type="ChEBI" id="CHEBI:64612"/>
        <dbReference type="EC" id="2.1.1.17"/>
    </reaction>
</comment>
<comment type="pathway">
    <text evidence="2">Phospholipid metabolism; phosphatidylcholine biosynthesis.</text>
</comment>
<comment type="subcellular location">
    <subcellularLocation>
        <location evidence="2">Endoplasmic reticulum membrane</location>
        <topology evidence="2">Multi-pass membrane protein</topology>
    </subcellularLocation>
</comment>
<comment type="similarity">
    <text evidence="2">Belongs to the class VI-like SAM-binding methyltransferase superfamily. CHO2 family.</text>
</comment>
<proteinExistence type="inferred from homology"/>
<evidence type="ECO:0000250" key="1">
    <source>
        <dbReference type="UniProtKB" id="P05374"/>
    </source>
</evidence>
<evidence type="ECO:0000255" key="2">
    <source>
        <dbReference type="HAMAP-Rule" id="MF_03217"/>
    </source>
</evidence>
<accession>B5VJA0</accession>
<reference key="1">
    <citation type="journal article" date="2008" name="FEMS Yeast Res.">
        <title>Comparative genome analysis of a Saccharomyces cerevisiae wine strain.</title>
        <authorList>
            <person name="Borneman A.R."/>
            <person name="Forgan A.H."/>
            <person name="Pretorius I.S."/>
            <person name="Chambers P.J."/>
        </authorList>
    </citation>
    <scope>NUCLEOTIDE SEQUENCE [LARGE SCALE GENOMIC DNA]</scope>
    <source>
        <strain>AWRI1631</strain>
    </source>
</reference>
<keyword id="KW-0007">Acetylation</keyword>
<keyword id="KW-0256">Endoplasmic reticulum</keyword>
<keyword id="KW-0444">Lipid biosynthesis</keyword>
<keyword id="KW-0443">Lipid metabolism</keyword>
<keyword id="KW-0472">Membrane</keyword>
<keyword id="KW-0489">Methyltransferase</keyword>
<keyword id="KW-0594">Phospholipid biosynthesis</keyword>
<keyword id="KW-1208">Phospholipid metabolism</keyword>
<keyword id="KW-0949">S-adenosyl-L-methionine</keyword>
<keyword id="KW-0808">Transferase</keyword>
<keyword id="KW-0812">Transmembrane</keyword>
<keyword id="KW-1133">Transmembrane helix</keyword>
<sequence>MSSCKTTLSEMVGSVTKDRGTINVKARTRSSNVTFKPPVTHDMVRSLFDPTLKKSLLEKCIALAIISNFFICYWVFQRFGLQFTKYFFLVQYLFWRIAYNLGIGLVLHYQSHYETLTNCAKTHAIFSKIPHNKDANSNFSTNSNSFSEKFWNFIRKFCQYEIRSKMPKEYDLFAYPEEINVWLIFRQFVDLILMQDFVTYIIYVYLSIPYSWVQIFNWRSLLGVILILFNIWVKLDAHRVVKDYAWYWGDFFFLEESELIFDGVFNISPHPMYSIGYLGYYGLSLICNDYKVLLVSVFGHYSQFLFLKYVENPHIERTYGDGTDSDSQMNSRIDDLISKENYDYSRPLINMGLSFNNFNKLRFTDYFTIGTVAALMLGTIMNARFINLNYLFITVFVTKLVSWLFISTILYKQSQSKWFTRLFLENGYTQVYSYEQWQFIYNYYLVLTYTLMIIYTGLQIWSNFSNINNSQLIFGLILVALQTWCDKETRLAISDFGWFYGDFFLSNYISTRKLTSQGIYRYLNHPEAVLGVVGVWGTVLMTNFAVTNIILAVLWTLTNFILVKFIETPHVNKIYGKTKRVSGVGKTLLGLKPLRQVSDIVNRIENIIIKSLVDESKNSNGGAELLPKNYQDNKEWNILIQEAMDSVATRLSPYCELKIENEQIETNFVLPTPVTLNWKMPIELYNGDDWIGLYKVIDTRADREKTRVGSGGHWSATSKDSYMNHGLRHKESVTEIKATEKYVQGKVTFDTSLLYFENGIYEFRYHSGNSHKVLLISTPFEISLPVLNTTTPELFEKDLTEFLTKVNVLKDGKFRPLGNKFFGMDSLKQLIKNSIGVELSSEYMRRVNGDAHVISHRAWDIKQTLDSLA</sequence>
<dbReference type="EC" id="2.1.1.17" evidence="2"/>
<dbReference type="EMBL" id="ABSV01000974">
    <property type="protein sequence ID" value="EDZ72001.1"/>
    <property type="molecule type" value="Genomic_DNA"/>
</dbReference>
<dbReference type="UniPathway" id="UPA00753"/>
<dbReference type="Proteomes" id="UP000008988">
    <property type="component" value="Unassembled WGS sequence"/>
</dbReference>
<dbReference type="GO" id="GO:0005789">
    <property type="term" value="C:endoplasmic reticulum membrane"/>
    <property type="evidence" value="ECO:0007669"/>
    <property type="project" value="UniProtKB-SubCell"/>
</dbReference>
<dbReference type="GO" id="GO:0004608">
    <property type="term" value="F:phosphatidylethanolamine N-methyltransferase activity"/>
    <property type="evidence" value="ECO:0007669"/>
    <property type="project" value="UniProtKB-UniRule"/>
</dbReference>
<dbReference type="GO" id="GO:0032259">
    <property type="term" value="P:methylation"/>
    <property type="evidence" value="ECO:0007669"/>
    <property type="project" value="UniProtKB-KW"/>
</dbReference>
<dbReference type="GO" id="GO:0006656">
    <property type="term" value="P:phosphatidylcholine biosynthetic process"/>
    <property type="evidence" value="ECO:0007669"/>
    <property type="project" value="UniProtKB-UniRule"/>
</dbReference>
<dbReference type="FunFam" id="1.20.120.1630:FF:000016">
    <property type="entry name" value="Phosphatidylethanolamine N-methyltransferase"/>
    <property type="match status" value="1"/>
</dbReference>
<dbReference type="Gene3D" id="1.20.120.1630">
    <property type="match status" value="2"/>
</dbReference>
<dbReference type="Gene3D" id="2.60.40.2840">
    <property type="match status" value="1"/>
</dbReference>
<dbReference type="HAMAP" id="MF_03217">
    <property type="entry name" value="PEMT"/>
    <property type="match status" value="1"/>
</dbReference>
<dbReference type="InterPro" id="IPR007318">
    <property type="entry name" value="Phopholipid_MeTrfase"/>
</dbReference>
<dbReference type="InterPro" id="IPR016219">
    <property type="entry name" value="Phosphatid-EA_MeTrfase_fun"/>
</dbReference>
<dbReference type="PANTHER" id="PTHR32138">
    <property type="entry name" value="PHOSPHATIDYLETHANOLAMINE N-METHYLTRANSFERASE"/>
    <property type="match status" value="1"/>
</dbReference>
<dbReference type="PANTHER" id="PTHR32138:SF0">
    <property type="entry name" value="PHOSPHATIDYLETHANOLAMINE N-METHYLTRANSFERASE"/>
    <property type="match status" value="1"/>
</dbReference>
<dbReference type="Pfam" id="PF04191">
    <property type="entry name" value="PEMT"/>
    <property type="match status" value="2"/>
</dbReference>
<dbReference type="PIRSF" id="PIRSF000383">
    <property type="entry name" value="PEAMT"/>
    <property type="match status" value="1"/>
</dbReference>
<dbReference type="PROSITE" id="PS51598">
    <property type="entry name" value="SAM_CHO2"/>
    <property type="match status" value="1"/>
</dbReference>
<feature type="initiator methionine" description="Removed" evidence="1">
    <location>
        <position position="1"/>
    </location>
</feature>
<feature type="chain" id="PRO_0000405912" description="Phosphatidylethanolamine N-methyltransferase">
    <location>
        <begin position="2"/>
        <end position="869"/>
    </location>
</feature>
<feature type="topological domain" description="Lumenal" evidence="2">
    <location>
        <begin position="2"/>
        <end position="55"/>
    </location>
</feature>
<feature type="transmembrane region" description="Helical" evidence="2">
    <location>
        <begin position="56"/>
        <end position="76"/>
    </location>
</feature>
<feature type="topological domain" description="Cytoplasmic" evidence="2">
    <location>
        <begin position="77"/>
        <end position="86"/>
    </location>
</feature>
<feature type="transmembrane region" description="Helical" evidence="2">
    <location>
        <begin position="87"/>
        <end position="107"/>
    </location>
</feature>
<feature type="topological domain" description="Lumenal" evidence="2">
    <location>
        <begin position="108"/>
        <end position="187"/>
    </location>
</feature>
<feature type="transmembrane region" description="Helical" evidence="2">
    <location>
        <begin position="188"/>
        <end position="208"/>
    </location>
</feature>
<feature type="topological domain" description="Cytoplasmic" evidence="2">
    <location>
        <begin position="209"/>
        <end position="212"/>
    </location>
</feature>
<feature type="transmembrane region" description="Helical" evidence="2">
    <location>
        <begin position="213"/>
        <end position="233"/>
    </location>
</feature>
<feature type="topological domain" description="Lumenal" evidence="2">
    <location>
        <begin position="234"/>
        <end position="258"/>
    </location>
</feature>
<feature type="transmembrane region" description="Helical" evidence="2">
    <location>
        <begin position="259"/>
        <end position="279"/>
    </location>
</feature>
<feature type="topological domain" description="Cytoplasmic" evidence="2">
    <location>
        <begin position="280"/>
        <end position="291"/>
    </location>
</feature>
<feature type="transmembrane region" description="Helical" evidence="2">
    <location>
        <begin position="292"/>
        <end position="310"/>
    </location>
</feature>
<feature type="topological domain" description="Lumenal" evidence="2">
    <location>
        <begin position="311"/>
        <end position="362"/>
    </location>
</feature>
<feature type="transmembrane region" description="Helical" evidence="2">
    <location>
        <begin position="363"/>
        <end position="383"/>
    </location>
</feature>
<feature type="topological domain" description="Cytoplasmic" evidence="2">
    <location>
        <begin position="384"/>
        <end position="389"/>
    </location>
</feature>
<feature type="transmembrane region" description="Helical" evidence="2">
    <location>
        <begin position="390"/>
        <end position="410"/>
    </location>
</feature>
<feature type="topological domain" description="Lumenal" evidence="2">
    <location>
        <begin position="411"/>
        <end position="439"/>
    </location>
</feature>
<feature type="transmembrane region" description="Helical" evidence="2">
    <location>
        <begin position="440"/>
        <end position="460"/>
    </location>
</feature>
<feature type="topological domain" description="Cytoplasmic" evidence="2">
    <location>
        <begin position="461"/>
        <end position="463"/>
    </location>
</feature>
<feature type="transmembrane region" description="Helical" evidence="2">
    <location>
        <begin position="464"/>
        <end position="484"/>
    </location>
</feature>
<feature type="topological domain" description="Lumenal" evidence="2">
    <location>
        <begin position="485"/>
        <end position="534"/>
    </location>
</feature>
<feature type="transmembrane region" description="Helical" evidence="2">
    <location>
        <begin position="535"/>
        <end position="555"/>
    </location>
</feature>
<feature type="topological domain" description="Cytoplasmic" evidence="2">
    <location>
        <begin position="556"/>
        <end position="869"/>
    </location>
</feature>
<feature type="modified residue" description="N-acetylserine" evidence="1">
    <location>
        <position position="2"/>
    </location>
</feature>